<evidence type="ECO:0000255" key="1">
    <source>
        <dbReference type="HAMAP-Rule" id="MF_00539"/>
    </source>
</evidence>
<evidence type="ECO:0000305" key="2"/>
<sequence length="88" mass="9374">MAHKKGASSSRNGRDSAAQRLGVKRFGGQVVKAGEILVRQRGTHFHPGVNVGRGGDDTLFATAPGAVEFGTKRGRKYVNIVRVTRAEA</sequence>
<proteinExistence type="inferred from homology"/>
<feature type="chain" id="PRO_1000017525" description="Large ribosomal subunit protein bL27">
    <location>
        <begin position="1"/>
        <end position="88"/>
    </location>
</feature>
<dbReference type="EMBL" id="CP000511">
    <property type="protein sequence ID" value="ABM14722.1"/>
    <property type="molecule type" value="Genomic_DNA"/>
</dbReference>
<dbReference type="RefSeq" id="WP_011781102.1">
    <property type="nucleotide sequence ID" value="NC_008726.1"/>
</dbReference>
<dbReference type="SMR" id="A1TC22"/>
<dbReference type="STRING" id="350058.Mvan_3945"/>
<dbReference type="KEGG" id="mva:Mvan_3945"/>
<dbReference type="eggNOG" id="COG0211">
    <property type="taxonomic scope" value="Bacteria"/>
</dbReference>
<dbReference type="HOGENOM" id="CLU_095424_4_0_11"/>
<dbReference type="Proteomes" id="UP000009159">
    <property type="component" value="Chromosome"/>
</dbReference>
<dbReference type="GO" id="GO:0022625">
    <property type="term" value="C:cytosolic large ribosomal subunit"/>
    <property type="evidence" value="ECO:0007669"/>
    <property type="project" value="TreeGrafter"/>
</dbReference>
<dbReference type="GO" id="GO:0003735">
    <property type="term" value="F:structural constituent of ribosome"/>
    <property type="evidence" value="ECO:0007669"/>
    <property type="project" value="InterPro"/>
</dbReference>
<dbReference type="GO" id="GO:0006412">
    <property type="term" value="P:translation"/>
    <property type="evidence" value="ECO:0007669"/>
    <property type="project" value="UniProtKB-UniRule"/>
</dbReference>
<dbReference type="FunFam" id="2.40.50.100:FF:000020">
    <property type="entry name" value="50S ribosomal protein L27"/>
    <property type="match status" value="1"/>
</dbReference>
<dbReference type="Gene3D" id="2.40.50.100">
    <property type="match status" value="1"/>
</dbReference>
<dbReference type="HAMAP" id="MF_00539">
    <property type="entry name" value="Ribosomal_bL27"/>
    <property type="match status" value="1"/>
</dbReference>
<dbReference type="InterPro" id="IPR001684">
    <property type="entry name" value="Ribosomal_bL27"/>
</dbReference>
<dbReference type="InterPro" id="IPR018261">
    <property type="entry name" value="Ribosomal_bL27_CS"/>
</dbReference>
<dbReference type="NCBIfam" id="TIGR00062">
    <property type="entry name" value="L27"/>
    <property type="match status" value="1"/>
</dbReference>
<dbReference type="PANTHER" id="PTHR15893:SF0">
    <property type="entry name" value="LARGE RIBOSOMAL SUBUNIT PROTEIN BL27M"/>
    <property type="match status" value="1"/>
</dbReference>
<dbReference type="PANTHER" id="PTHR15893">
    <property type="entry name" value="RIBOSOMAL PROTEIN L27"/>
    <property type="match status" value="1"/>
</dbReference>
<dbReference type="Pfam" id="PF01016">
    <property type="entry name" value="Ribosomal_L27"/>
    <property type="match status" value="1"/>
</dbReference>
<dbReference type="PRINTS" id="PR00063">
    <property type="entry name" value="RIBOSOMALL27"/>
</dbReference>
<dbReference type="SUPFAM" id="SSF110324">
    <property type="entry name" value="Ribosomal L27 protein-like"/>
    <property type="match status" value="1"/>
</dbReference>
<dbReference type="PROSITE" id="PS00831">
    <property type="entry name" value="RIBOSOMAL_L27"/>
    <property type="match status" value="1"/>
</dbReference>
<gene>
    <name evidence="1" type="primary">rpmA</name>
    <name type="ordered locus">Mvan_3945</name>
</gene>
<organism>
    <name type="scientific">Mycolicibacterium vanbaalenii (strain DSM 7251 / JCM 13017 / BCRC 16820 / KCTC 9966 / NRRL B-24157 / PYR-1)</name>
    <name type="common">Mycobacterium vanbaalenii</name>
    <dbReference type="NCBI Taxonomy" id="350058"/>
    <lineage>
        <taxon>Bacteria</taxon>
        <taxon>Bacillati</taxon>
        <taxon>Actinomycetota</taxon>
        <taxon>Actinomycetes</taxon>
        <taxon>Mycobacteriales</taxon>
        <taxon>Mycobacteriaceae</taxon>
        <taxon>Mycolicibacterium</taxon>
    </lineage>
</organism>
<protein>
    <recommendedName>
        <fullName evidence="1">Large ribosomal subunit protein bL27</fullName>
    </recommendedName>
    <alternativeName>
        <fullName evidence="2">50S ribosomal protein L27</fullName>
    </alternativeName>
</protein>
<comment type="similarity">
    <text evidence="1">Belongs to the bacterial ribosomal protein bL27 family.</text>
</comment>
<reference key="1">
    <citation type="submission" date="2006-12" db="EMBL/GenBank/DDBJ databases">
        <title>Complete sequence of Mycobacterium vanbaalenii PYR-1.</title>
        <authorList>
            <consortium name="US DOE Joint Genome Institute"/>
            <person name="Copeland A."/>
            <person name="Lucas S."/>
            <person name="Lapidus A."/>
            <person name="Barry K."/>
            <person name="Detter J.C."/>
            <person name="Glavina del Rio T."/>
            <person name="Hammon N."/>
            <person name="Israni S."/>
            <person name="Dalin E."/>
            <person name="Tice H."/>
            <person name="Pitluck S."/>
            <person name="Singan V."/>
            <person name="Schmutz J."/>
            <person name="Larimer F."/>
            <person name="Land M."/>
            <person name="Hauser L."/>
            <person name="Kyrpides N."/>
            <person name="Anderson I.J."/>
            <person name="Miller C."/>
            <person name="Richardson P."/>
        </authorList>
    </citation>
    <scope>NUCLEOTIDE SEQUENCE [LARGE SCALE GENOMIC DNA]</scope>
    <source>
        <strain>DSM 7251 / JCM 13017 / BCRC 16820 / KCTC 9966 / NRRL B-24157 / PYR-1</strain>
    </source>
</reference>
<name>RL27_MYCVP</name>
<keyword id="KW-0687">Ribonucleoprotein</keyword>
<keyword id="KW-0689">Ribosomal protein</keyword>
<accession>A1TC22</accession>